<comment type="function">
    <text evidence="1">Possible multifunctional protease. Efficiently cleaves 'bz-Phe-Arg-4-methylcoumaryl-7-amide', a kallikrein substrate, and weakly cleaves other substrates for kallikrein and trypsin (By similarity).</text>
</comment>
<comment type="subcellular location">
    <subcellularLocation>
        <location>Secreted</location>
    </subcellularLocation>
</comment>
<comment type="alternative products">
    <event type="alternative splicing"/>
    <isoform>
        <id>Q9QYN3-1</id>
        <name>2</name>
        <sequence type="displayed"/>
    </isoform>
    <isoform>
        <id>Q9QYN3-2</id>
        <name>1</name>
        <sequence type="described" ref="VSP_017318"/>
    </isoform>
</comment>
<comment type="tissue specificity">
    <text evidence="4">Expressed in brain and prostate (isoform 1) and prostate (isoform 2).</text>
</comment>
<comment type="similarity">
    <text evidence="3">Belongs to the peptidase S1 family. Kallikrein subfamily.</text>
</comment>
<feature type="signal peptide" evidence="2">
    <location>
        <begin position="1"/>
        <end position="44"/>
    </location>
</feature>
<feature type="propeptide" id="PRO_0000224185" description="Activation peptide" evidence="2">
    <location>
        <begin position="45"/>
        <end position="47"/>
    </location>
</feature>
<feature type="chain" id="PRO_0000224186" description="Kallikrein-11">
    <location>
        <begin position="48"/>
        <end position="276"/>
    </location>
</feature>
<feature type="domain" description="Peptidase S1" evidence="3">
    <location>
        <begin position="48"/>
        <end position="274"/>
    </location>
</feature>
<feature type="active site" description="Charge relay system" evidence="1">
    <location>
        <position position="88"/>
    </location>
</feature>
<feature type="active site" description="Charge relay system" evidence="1">
    <location>
        <position position="136"/>
    </location>
</feature>
<feature type="active site" description="Charge relay system" evidence="1">
    <location>
        <position position="229"/>
    </location>
</feature>
<feature type="glycosylation site" description="N-linked (GlcNAc...) asparagine" evidence="2">
    <location>
        <position position="125"/>
    </location>
</feature>
<feature type="glycosylation site" description="N-linked (GlcNAc...) asparagine" evidence="2">
    <location>
        <position position="191"/>
    </location>
</feature>
<feature type="glycosylation site" description="N-linked (GlcNAc...) asparagine" evidence="2">
    <location>
        <position position="207"/>
    </location>
</feature>
<feature type="glycosylation site" description="N-linked (GlcNAc...) asparagine" evidence="2">
    <location>
        <position position="236"/>
    </location>
</feature>
<feature type="disulfide bond" evidence="3">
    <location>
        <begin position="54"/>
        <end position="189"/>
    </location>
</feature>
<feature type="disulfide bond" evidence="3">
    <location>
        <begin position="73"/>
        <end position="89"/>
    </location>
</feature>
<feature type="disulfide bond" evidence="3">
    <location>
        <begin position="168"/>
        <end position="235"/>
    </location>
</feature>
<feature type="disulfide bond" evidence="3">
    <location>
        <begin position="200"/>
        <end position="214"/>
    </location>
</feature>
<feature type="disulfide bond" evidence="3">
    <location>
        <begin position="225"/>
        <end position="250"/>
    </location>
</feature>
<feature type="splice variant" id="VSP_017318" description="In isoform 1." evidence="6">
    <location>
        <begin position="1"/>
        <end position="27"/>
    </location>
</feature>
<feature type="mutagenesis site" description="Knockin homozygous mice exhibit hyperkeratosis and scaling. Heterozygous mice exhibit mild hyperkeratosis." evidence="5">
    <original>G</original>
    <variation>E</variation>
    <location>
        <position position="44"/>
    </location>
</feature>
<name>KLK11_MOUSE</name>
<keyword id="KW-0025">Alternative splicing</keyword>
<keyword id="KW-1015">Disulfide bond</keyword>
<keyword id="KW-0325">Glycoprotein</keyword>
<keyword id="KW-0378">Hydrolase</keyword>
<keyword id="KW-0645">Protease</keyword>
<keyword id="KW-1185">Reference proteome</keyword>
<keyword id="KW-0964">Secreted</keyword>
<keyword id="KW-0720">Serine protease</keyword>
<keyword id="KW-0732">Signal</keyword>
<keyword id="KW-0865">Zymogen</keyword>
<organism>
    <name type="scientific">Mus musculus</name>
    <name type="common">Mouse</name>
    <dbReference type="NCBI Taxonomy" id="10090"/>
    <lineage>
        <taxon>Eukaryota</taxon>
        <taxon>Metazoa</taxon>
        <taxon>Chordata</taxon>
        <taxon>Craniata</taxon>
        <taxon>Vertebrata</taxon>
        <taxon>Euteleostomi</taxon>
        <taxon>Mammalia</taxon>
        <taxon>Eutheria</taxon>
        <taxon>Euarchontoglires</taxon>
        <taxon>Glires</taxon>
        <taxon>Rodentia</taxon>
        <taxon>Myomorpha</taxon>
        <taxon>Muroidea</taxon>
        <taxon>Muridae</taxon>
        <taxon>Murinae</taxon>
        <taxon>Mus</taxon>
        <taxon>Mus</taxon>
    </lineage>
</organism>
<evidence type="ECO:0000250" key="1"/>
<evidence type="ECO:0000255" key="2"/>
<evidence type="ECO:0000255" key="3">
    <source>
        <dbReference type="PROSITE-ProRule" id="PRU00274"/>
    </source>
</evidence>
<evidence type="ECO:0000269" key="4">
    <source>
    </source>
</evidence>
<evidence type="ECO:0000269" key="5">
    <source>
    </source>
</evidence>
<evidence type="ECO:0000303" key="6">
    <source>
    </source>
</evidence>
<reference key="1">
    <citation type="journal article" date="2000" name="Biochim. Biophys. Acta">
        <title>cDNA cloning and tissue-specific splicing variants of mouse hippostasin/TLSP (PRSS20).</title>
        <authorList>
            <person name="Mitsui S."/>
            <person name="Okui A."/>
            <person name="Kominami K."/>
            <person name="Uemura H."/>
            <person name="Yamagushi N."/>
        </authorList>
    </citation>
    <scope>NUCLEOTIDE SEQUENCE [MRNA] (ISOFORMS 1 AND 2)</scope>
    <scope>TISSUE SPECIFICITY</scope>
    <source>
        <tissue>Brain</tissue>
        <tissue>Prostate</tissue>
    </source>
</reference>
<reference key="2">
    <citation type="journal article" date="2005" name="Science">
        <title>The transcriptional landscape of the mammalian genome.</title>
        <authorList>
            <person name="Carninci P."/>
            <person name="Kasukawa T."/>
            <person name="Katayama S."/>
            <person name="Gough J."/>
            <person name="Frith M.C."/>
            <person name="Maeda N."/>
            <person name="Oyama R."/>
            <person name="Ravasi T."/>
            <person name="Lenhard B."/>
            <person name="Wells C."/>
            <person name="Kodzius R."/>
            <person name="Shimokawa K."/>
            <person name="Bajic V.B."/>
            <person name="Brenner S.E."/>
            <person name="Batalov S."/>
            <person name="Forrest A.R."/>
            <person name="Zavolan M."/>
            <person name="Davis M.J."/>
            <person name="Wilming L.G."/>
            <person name="Aidinis V."/>
            <person name="Allen J.E."/>
            <person name="Ambesi-Impiombato A."/>
            <person name="Apweiler R."/>
            <person name="Aturaliya R.N."/>
            <person name="Bailey T.L."/>
            <person name="Bansal M."/>
            <person name="Baxter L."/>
            <person name="Beisel K.W."/>
            <person name="Bersano T."/>
            <person name="Bono H."/>
            <person name="Chalk A.M."/>
            <person name="Chiu K.P."/>
            <person name="Choudhary V."/>
            <person name="Christoffels A."/>
            <person name="Clutterbuck D.R."/>
            <person name="Crowe M.L."/>
            <person name="Dalla E."/>
            <person name="Dalrymple B.P."/>
            <person name="de Bono B."/>
            <person name="Della Gatta G."/>
            <person name="di Bernardo D."/>
            <person name="Down T."/>
            <person name="Engstrom P."/>
            <person name="Fagiolini M."/>
            <person name="Faulkner G."/>
            <person name="Fletcher C.F."/>
            <person name="Fukushima T."/>
            <person name="Furuno M."/>
            <person name="Futaki S."/>
            <person name="Gariboldi M."/>
            <person name="Georgii-Hemming P."/>
            <person name="Gingeras T.R."/>
            <person name="Gojobori T."/>
            <person name="Green R.E."/>
            <person name="Gustincich S."/>
            <person name="Harbers M."/>
            <person name="Hayashi Y."/>
            <person name="Hensch T.K."/>
            <person name="Hirokawa N."/>
            <person name="Hill D."/>
            <person name="Huminiecki L."/>
            <person name="Iacono M."/>
            <person name="Ikeo K."/>
            <person name="Iwama A."/>
            <person name="Ishikawa T."/>
            <person name="Jakt M."/>
            <person name="Kanapin A."/>
            <person name="Katoh M."/>
            <person name="Kawasawa Y."/>
            <person name="Kelso J."/>
            <person name="Kitamura H."/>
            <person name="Kitano H."/>
            <person name="Kollias G."/>
            <person name="Krishnan S.P."/>
            <person name="Kruger A."/>
            <person name="Kummerfeld S.K."/>
            <person name="Kurochkin I.V."/>
            <person name="Lareau L.F."/>
            <person name="Lazarevic D."/>
            <person name="Lipovich L."/>
            <person name="Liu J."/>
            <person name="Liuni S."/>
            <person name="McWilliam S."/>
            <person name="Madan Babu M."/>
            <person name="Madera M."/>
            <person name="Marchionni L."/>
            <person name="Matsuda H."/>
            <person name="Matsuzawa S."/>
            <person name="Miki H."/>
            <person name="Mignone F."/>
            <person name="Miyake S."/>
            <person name="Morris K."/>
            <person name="Mottagui-Tabar S."/>
            <person name="Mulder N."/>
            <person name="Nakano N."/>
            <person name="Nakauchi H."/>
            <person name="Ng P."/>
            <person name="Nilsson R."/>
            <person name="Nishiguchi S."/>
            <person name="Nishikawa S."/>
            <person name="Nori F."/>
            <person name="Ohara O."/>
            <person name="Okazaki Y."/>
            <person name="Orlando V."/>
            <person name="Pang K.C."/>
            <person name="Pavan W.J."/>
            <person name="Pavesi G."/>
            <person name="Pesole G."/>
            <person name="Petrovsky N."/>
            <person name="Piazza S."/>
            <person name="Reed J."/>
            <person name="Reid J.F."/>
            <person name="Ring B.Z."/>
            <person name="Ringwald M."/>
            <person name="Rost B."/>
            <person name="Ruan Y."/>
            <person name="Salzberg S.L."/>
            <person name="Sandelin A."/>
            <person name="Schneider C."/>
            <person name="Schoenbach C."/>
            <person name="Sekiguchi K."/>
            <person name="Semple C.A."/>
            <person name="Seno S."/>
            <person name="Sessa L."/>
            <person name="Sheng Y."/>
            <person name="Shibata Y."/>
            <person name="Shimada H."/>
            <person name="Shimada K."/>
            <person name="Silva D."/>
            <person name="Sinclair B."/>
            <person name="Sperling S."/>
            <person name="Stupka E."/>
            <person name="Sugiura K."/>
            <person name="Sultana R."/>
            <person name="Takenaka Y."/>
            <person name="Taki K."/>
            <person name="Tammoja K."/>
            <person name="Tan S.L."/>
            <person name="Tang S."/>
            <person name="Taylor M.S."/>
            <person name="Tegner J."/>
            <person name="Teichmann S.A."/>
            <person name="Ueda H.R."/>
            <person name="van Nimwegen E."/>
            <person name="Verardo R."/>
            <person name="Wei C.L."/>
            <person name="Yagi K."/>
            <person name="Yamanishi H."/>
            <person name="Zabarovsky E."/>
            <person name="Zhu S."/>
            <person name="Zimmer A."/>
            <person name="Hide W."/>
            <person name="Bult C."/>
            <person name="Grimmond S.M."/>
            <person name="Teasdale R.D."/>
            <person name="Liu E.T."/>
            <person name="Brusic V."/>
            <person name="Quackenbush J."/>
            <person name="Wahlestedt C."/>
            <person name="Mattick J.S."/>
            <person name="Hume D.A."/>
            <person name="Kai C."/>
            <person name="Sasaki D."/>
            <person name="Tomaru Y."/>
            <person name="Fukuda S."/>
            <person name="Kanamori-Katayama M."/>
            <person name="Suzuki M."/>
            <person name="Aoki J."/>
            <person name="Arakawa T."/>
            <person name="Iida J."/>
            <person name="Imamura K."/>
            <person name="Itoh M."/>
            <person name="Kato T."/>
            <person name="Kawaji H."/>
            <person name="Kawagashira N."/>
            <person name="Kawashima T."/>
            <person name="Kojima M."/>
            <person name="Kondo S."/>
            <person name="Konno H."/>
            <person name="Nakano K."/>
            <person name="Ninomiya N."/>
            <person name="Nishio T."/>
            <person name="Okada M."/>
            <person name="Plessy C."/>
            <person name="Shibata K."/>
            <person name="Shiraki T."/>
            <person name="Suzuki S."/>
            <person name="Tagami M."/>
            <person name="Waki K."/>
            <person name="Watahiki A."/>
            <person name="Okamura-Oho Y."/>
            <person name="Suzuki H."/>
            <person name="Kawai J."/>
            <person name="Hayashizaki Y."/>
        </authorList>
    </citation>
    <scope>NUCLEOTIDE SEQUENCE [LARGE SCALE MRNA] (ISOFORM 2)</scope>
    <source>
        <strain>C57BL/6J</strain>
        <tissue>Tongue</tissue>
    </source>
</reference>
<reference key="3">
    <citation type="journal article" date="2023" name="Br. J. Dermatol.">
        <title>Variants in KLK11, affecting signal peptide cleavage of kallikrein-related peptidase 11, cause an autosomal-dominant cornification disorder.</title>
        <authorList>
            <person name="Gong Z."/>
            <person name="Dai S."/>
            <person name="Jiang X."/>
            <person name="Lee M."/>
            <person name="Zhu X."/>
            <person name="Wang H."/>
            <person name="Lin Z."/>
        </authorList>
    </citation>
    <scope>MUTAGENESIS OF GLY-44</scope>
</reference>
<sequence>MRRLKSDWKLSTETREPGARPALLQARMILRLIALALVTGHVGGETRIIKGYECRPHSQPWQVALFQKTRLLCGATLIAPKWLLTAAHCRKPHYVILLGEHNLEKTDGCEQRRMATESFPHPDFNNSLPNKDHRNDIMLVKMSSPVFFTRAVQPLTLSPHCVAAGTSCLISGWGTTSSPQLRLPHSLRCANVSIIEHKECEKAYPGNITDTMLCASVRKEGKDSCQGDSGGPLVCNGSLQGIISWGQDPCAVTRKPGVYTKVCKYFNWIHEVMRNN</sequence>
<proteinExistence type="evidence at protein level"/>
<gene>
    <name type="primary">Klk11</name>
    <name type="synonym">Prss20</name>
</gene>
<dbReference type="EC" id="3.4.21.-"/>
<dbReference type="EMBL" id="AB016226">
    <property type="protein sequence ID" value="BAA88825.1"/>
    <property type="molecule type" value="mRNA"/>
</dbReference>
<dbReference type="EMBL" id="AB016227">
    <property type="protein sequence ID" value="BAA36955.1"/>
    <property type="molecule type" value="mRNA"/>
</dbReference>
<dbReference type="EMBL" id="AK009360">
    <property type="protein sequence ID" value="BAB26241.2"/>
    <property type="molecule type" value="mRNA"/>
</dbReference>
<dbReference type="EMBL" id="AK009720">
    <property type="protein sequence ID" value="BAB26461.2"/>
    <property type="molecule type" value="mRNA"/>
</dbReference>
<dbReference type="CCDS" id="CCDS39935.1">
    <molecule id="Q9QYN3-2"/>
</dbReference>
<dbReference type="CCDS" id="CCDS52227.1">
    <molecule id="Q9QYN3-1"/>
</dbReference>
<dbReference type="RefSeq" id="NP_001170844.1">
    <molecule id="Q9QYN3-1"/>
    <property type="nucleotide sequence ID" value="NM_001177373.1"/>
</dbReference>
<dbReference type="RefSeq" id="NP_064358.1">
    <molecule id="Q9QYN3-2"/>
    <property type="nucleotide sequence ID" value="NM_019974.2"/>
</dbReference>
<dbReference type="SMR" id="Q9QYN3"/>
<dbReference type="BioGRID" id="208046">
    <property type="interactions" value="2"/>
</dbReference>
<dbReference type="FunCoup" id="Q9QYN3">
    <property type="interactions" value="87"/>
</dbReference>
<dbReference type="STRING" id="10090.ENSMUSP00000079101"/>
<dbReference type="MEROPS" id="S01.257"/>
<dbReference type="GlyCosmos" id="Q9QYN3">
    <property type="glycosylation" value="4 sites, No reported glycans"/>
</dbReference>
<dbReference type="GlyGen" id="Q9QYN3">
    <property type="glycosylation" value="4 sites"/>
</dbReference>
<dbReference type="iPTMnet" id="Q9QYN3"/>
<dbReference type="PhosphoSitePlus" id="Q9QYN3"/>
<dbReference type="PaxDb" id="10090-ENSMUSP00000079101"/>
<dbReference type="ProteomicsDB" id="264778">
    <molecule id="Q9QYN3-1"/>
</dbReference>
<dbReference type="ProteomicsDB" id="264779">
    <molecule id="Q9QYN3-2"/>
</dbReference>
<dbReference type="Antibodypedia" id="18965">
    <property type="antibodies" value="364 antibodies from 32 providers"/>
</dbReference>
<dbReference type="DNASU" id="56538"/>
<dbReference type="Ensembl" id="ENSMUST00000080211.12">
    <molecule id="Q9QYN3-1"/>
    <property type="protein sequence ID" value="ENSMUSP00000079101.6"/>
    <property type="gene ID" value="ENSMUSG00000067616.12"/>
</dbReference>
<dbReference type="Ensembl" id="ENSMUST00000171458.2">
    <molecule id="Q9QYN3-2"/>
    <property type="protein sequence ID" value="ENSMUSP00000132721.2"/>
    <property type="gene ID" value="ENSMUSG00000067616.12"/>
</dbReference>
<dbReference type="GeneID" id="56538"/>
<dbReference type="KEGG" id="mmu:56538"/>
<dbReference type="UCSC" id="uc009gnm.1">
    <molecule id="Q9QYN3-1"/>
    <property type="organism name" value="mouse"/>
</dbReference>
<dbReference type="AGR" id="MGI:1929977"/>
<dbReference type="CTD" id="11012"/>
<dbReference type="MGI" id="MGI:1929977">
    <property type="gene designation" value="Klk11"/>
</dbReference>
<dbReference type="VEuPathDB" id="HostDB:ENSMUSG00000067616"/>
<dbReference type="eggNOG" id="KOG3627">
    <property type="taxonomic scope" value="Eukaryota"/>
</dbReference>
<dbReference type="GeneTree" id="ENSGT01020000230389"/>
<dbReference type="HOGENOM" id="CLU_006842_1_1_1"/>
<dbReference type="InParanoid" id="Q9QYN3"/>
<dbReference type="OMA" id="ATISIPH"/>
<dbReference type="OrthoDB" id="546450at2759"/>
<dbReference type="PhylomeDB" id="Q9QYN3"/>
<dbReference type="TreeFam" id="TF331065"/>
<dbReference type="BioGRID-ORCS" id="56538">
    <property type="hits" value="1 hit in 79 CRISPR screens"/>
</dbReference>
<dbReference type="ChiTaRS" id="Klk11">
    <property type="organism name" value="mouse"/>
</dbReference>
<dbReference type="PRO" id="PR:Q9QYN3"/>
<dbReference type="Proteomes" id="UP000000589">
    <property type="component" value="Chromosome 7"/>
</dbReference>
<dbReference type="RNAct" id="Q9QYN3">
    <property type="molecule type" value="protein"/>
</dbReference>
<dbReference type="Bgee" id="ENSMUSG00000067616">
    <property type="expression patterns" value="Expressed in lip and 29 other cell types or tissues"/>
</dbReference>
<dbReference type="ExpressionAtlas" id="Q9QYN3">
    <property type="expression patterns" value="baseline and differential"/>
</dbReference>
<dbReference type="GO" id="GO:0005576">
    <property type="term" value="C:extracellular region"/>
    <property type="evidence" value="ECO:0000314"/>
    <property type="project" value="MGI"/>
</dbReference>
<dbReference type="GO" id="GO:0004252">
    <property type="term" value="F:serine-type endopeptidase activity"/>
    <property type="evidence" value="ECO:0007669"/>
    <property type="project" value="InterPro"/>
</dbReference>
<dbReference type="GO" id="GO:0006508">
    <property type="term" value="P:proteolysis"/>
    <property type="evidence" value="ECO:0007669"/>
    <property type="project" value="UniProtKB-KW"/>
</dbReference>
<dbReference type="CDD" id="cd00190">
    <property type="entry name" value="Tryp_SPc"/>
    <property type="match status" value="1"/>
</dbReference>
<dbReference type="FunFam" id="2.40.10.10:FF:000010">
    <property type="entry name" value="Kallikrein related peptidase 11"/>
    <property type="match status" value="1"/>
</dbReference>
<dbReference type="FunFam" id="2.40.10.10:FF:000056">
    <property type="entry name" value="Kallikrein related peptidase 11"/>
    <property type="match status" value="1"/>
</dbReference>
<dbReference type="Gene3D" id="2.40.10.10">
    <property type="entry name" value="Trypsin-like serine proteases"/>
    <property type="match status" value="2"/>
</dbReference>
<dbReference type="InterPro" id="IPR009003">
    <property type="entry name" value="Peptidase_S1_PA"/>
</dbReference>
<dbReference type="InterPro" id="IPR043504">
    <property type="entry name" value="Peptidase_S1_PA_chymotrypsin"/>
</dbReference>
<dbReference type="InterPro" id="IPR001314">
    <property type="entry name" value="Peptidase_S1A"/>
</dbReference>
<dbReference type="InterPro" id="IPR001254">
    <property type="entry name" value="Trypsin_dom"/>
</dbReference>
<dbReference type="InterPro" id="IPR018114">
    <property type="entry name" value="TRYPSIN_HIS"/>
</dbReference>
<dbReference type="InterPro" id="IPR033116">
    <property type="entry name" value="TRYPSIN_SER"/>
</dbReference>
<dbReference type="PANTHER" id="PTHR24271:SF68">
    <property type="entry name" value="KALLIKREIN-11"/>
    <property type="match status" value="1"/>
</dbReference>
<dbReference type="PANTHER" id="PTHR24271">
    <property type="entry name" value="KALLIKREIN-RELATED"/>
    <property type="match status" value="1"/>
</dbReference>
<dbReference type="Pfam" id="PF00089">
    <property type="entry name" value="Trypsin"/>
    <property type="match status" value="1"/>
</dbReference>
<dbReference type="PRINTS" id="PR00722">
    <property type="entry name" value="CHYMOTRYPSIN"/>
</dbReference>
<dbReference type="SMART" id="SM00020">
    <property type="entry name" value="Tryp_SPc"/>
    <property type="match status" value="1"/>
</dbReference>
<dbReference type="SUPFAM" id="SSF50494">
    <property type="entry name" value="Trypsin-like serine proteases"/>
    <property type="match status" value="1"/>
</dbReference>
<dbReference type="PROSITE" id="PS50240">
    <property type="entry name" value="TRYPSIN_DOM"/>
    <property type="match status" value="1"/>
</dbReference>
<dbReference type="PROSITE" id="PS00134">
    <property type="entry name" value="TRYPSIN_HIS"/>
    <property type="match status" value="1"/>
</dbReference>
<dbReference type="PROSITE" id="PS00135">
    <property type="entry name" value="TRYPSIN_SER"/>
    <property type="match status" value="1"/>
</dbReference>
<protein>
    <recommendedName>
        <fullName>Kallikrein-11</fullName>
        <ecNumber>3.4.21.-</ecNumber>
    </recommendedName>
    <alternativeName>
        <fullName>Hippostasin</fullName>
    </alternativeName>
    <alternativeName>
        <fullName>Serine protease 20</fullName>
    </alternativeName>
</protein>
<accession>Q9QYN3</accession>
<accession>Q9QYN4</accession>